<dbReference type="EC" id="2.7.7.23" evidence="1"/>
<dbReference type="EC" id="2.3.1.157" evidence="1"/>
<dbReference type="EMBL" id="CP000151">
    <property type="protein sequence ID" value="ABB09924.1"/>
    <property type="molecule type" value="Genomic_DNA"/>
</dbReference>
<dbReference type="RefSeq" id="WP_011353430.1">
    <property type="nucleotide sequence ID" value="NC_007510.1"/>
</dbReference>
<dbReference type="SMR" id="Q39C92"/>
<dbReference type="GeneID" id="45096202"/>
<dbReference type="KEGG" id="bur:Bcep18194_A6330"/>
<dbReference type="PATRIC" id="fig|482957.22.peg.3350"/>
<dbReference type="HOGENOM" id="CLU_029499_15_2_4"/>
<dbReference type="UniPathway" id="UPA00113">
    <property type="reaction ID" value="UER00532"/>
</dbReference>
<dbReference type="UniPathway" id="UPA00113">
    <property type="reaction ID" value="UER00533"/>
</dbReference>
<dbReference type="UniPathway" id="UPA00973"/>
<dbReference type="Proteomes" id="UP000002705">
    <property type="component" value="Chromosome 1"/>
</dbReference>
<dbReference type="GO" id="GO:0005737">
    <property type="term" value="C:cytoplasm"/>
    <property type="evidence" value="ECO:0007669"/>
    <property type="project" value="UniProtKB-SubCell"/>
</dbReference>
<dbReference type="GO" id="GO:0016020">
    <property type="term" value="C:membrane"/>
    <property type="evidence" value="ECO:0007669"/>
    <property type="project" value="GOC"/>
</dbReference>
<dbReference type="GO" id="GO:0019134">
    <property type="term" value="F:glucosamine-1-phosphate N-acetyltransferase activity"/>
    <property type="evidence" value="ECO:0007669"/>
    <property type="project" value="UniProtKB-UniRule"/>
</dbReference>
<dbReference type="GO" id="GO:0000287">
    <property type="term" value="F:magnesium ion binding"/>
    <property type="evidence" value="ECO:0007669"/>
    <property type="project" value="UniProtKB-UniRule"/>
</dbReference>
<dbReference type="GO" id="GO:0003977">
    <property type="term" value="F:UDP-N-acetylglucosamine diphosphorylase activity"/>
    <property type="evidence" value="ECO:0007669"/>
    <property type="project" value="UniProtKB-UniRule"/>
</dbReference>
<dbReference type="GO" id="GO:0000902">
    <property type="term" value="P:cell morphogenesis"/>
    <property type="evidence" value="ECO:0007669"/>
    <property type="project" value="UniProtKB-UniRule"/>
</dbReference>
<dbReference type="GO" id="GO:0071555">
    <property type="term" value="P:cell wall organization"/>
    <property type="evidence" value="ECO:0007669"/>
    <property type="project" value="UniProtKB-KW"/>
</dbReference>
<dbReference type="GO" id="GO:0009245">
    <property type="term" value="P:lipid A biosynthetic process"/>
    <property type="evidence" value="ECO:0007669"/>
    <property type="project" value="UniProtKB-UniRule"/>
</dbReference>
<dbReference type="GO" id="GO:0009252">
    <property type="term" value="P:peptidoglycan biosynthetic process"/>
    <property type="evidence" value="ECO:0007669"/>
    <property type="project" value="UniProtKB-UniRule"/>
</dbReference>
<dbReference type="GO" id="GO:0008360">
    <property type="term" value="P:regulation of cell shape"/>
    <property type="evidence" value="ECO:0007669"/>
    <property type="project" value="UniProtKB-KW"/>
</dbReference>
<dbReference type="GO" id="GO:0006048">
    <property type="term" value="P:UDP-N-acetylglucosamine biosynthetic process"/>
    <property type="evidence" value="ECO:0007669"/>
    <property type="project" value="UniProtKB-UniPathway"/>
</dbReference>
<dbReference type="CDD" id="cd02540">
    <property type="entry name" value="GT2_GlmU_N_bac"/>
    <property type="match status" value="1"/>
</dbReference>
<dbReference type="CDD" id="cd03353">
    <property type="entry name" value="LbH_GlmU_C"/>
    <property type="match status" value="1"/>
</dbReference>
<dbReference type="Gene3D" id="2.160.10.10">
    <property type="entry name" value="Hexapeptide repeat proteins"/>
    <property type="match status" value="1"/>
</dbReference>
<dbReference type="Gene3D" id="3.90.550.10">
    <property type="entry name" value="Spore Coat Polysaccharide Biosynthesis Protein SpsA, Chain A"/>
    <property type="match status" value="1"/>
</dbReference>
<dbReference type="HAMAP" id="MF_01631">
    <property type="entry name" value="GlmU"/>
    <property type="match status" value="1"/>
</dbReference>
<dbReference type="InterPro" id="IPR005882">
    <property type="entry name" value="Bifunctional_GlmU"/>
</dbReference>
<dbReference type="InterPro" id="IPR050065">
    <property type="entry name" value="GlmU-like"/>
</dbReference>
<dbReference type="InterPro" id="IPR038009">
    <property type="entry name" value="GlmU_C_LbH"/>
</dbReference>
<dbReference type="InterPro" id="IPR001451">
    <property type="entry name" value="Hexapep"/>
</dbReference>
<dbReference type="InterPro" id="IPR018357">
    <property type="entry name" value="Hexapep_transf_CS"/>
</dbReference>
<dbReference type="InterPro" id="IPR025877">
    <property type="entry name" value="MobA-like_NTP_Trfase"/>
</dbReference>
<dbReference type="InterPro" id="IPR029044">
    <property type="entry name" value="Nucleotide-diphossugar_trans"/>
</dbReference>
<dbReference type="InterPro" id="IPR011004">
    <property type="entry name" value="Trimer_LpxA-like_sf"/>
</dbReference>
<dbReference type="NCBIfam" id="TIGR01173">
    <property type="entry name" value="glmU"/>
    <property type="match status" value="1"/>
</dbReference>
<dbReference type="PANTHER" id="PTHR43584:SF3">
    <property type="entry name" value="BIFUNCTIONAL PROTEIN GLMU"/>
    <property type="match status" value="1"/>
</dbReference>
<dbReference type="PANTHER" id="PTHR43584">
    <property type="entry name" value="NUCLEOTIDYL TRANSFERASE"/>
    <property type="match status" value="1"/>
</dbReference>
<dbReference type="Pfam" id="PF00132">
    <property type="entry name" value="Hexapep"/>
    <property type="match status" value="2"/>
</dbReference>
<dbReference type="Pfam" id="PF12804">
    <property type="entry name" value="NTP_transf_3"/>
    <property type="match status" value="1"/>
</dbReference>
<dbReference type="SUPFAM" id="SSF53448">
    <property type="entry name" value="Nucleotide-diphospho-sugar transferases"/>
    <property type="match status" value="1"/>
</dbReference>
<dbReference type="SUPFAM" id="SSF51161">
    <property type="entry name" value="Trimeric LpxA-like enzymes"/>
    <property type="match status" value="1"/>
</dbReference>
<dbReference type="PROSITE" id="PS00101">
    <property type="entry name" value="HEXAPEP_TRANSFERASES"/>
    <property type="match status" value="2"/>
</dbReference>
<comment type="function">
    <text evidence="1">Catalyzes the last two sequential reactions in the de novo biosynthetic pathway for UDP-N-acetylglucosamine (UDP-GlcNAc). The C-terminal domain catalyzes the transfer of acetyl group from acetyl coenzyme A to glucosamine-1-phosphate (GlcN-1-P) to produce N-acetylglucosamine-1-phosphate (GlcNAc-1-P), which is converted into UDP-GlcNAc by the transfer of uridine 5-monophosphate (from uridine 5-triphosphate), a reaction catalyzed by the N-terminal domain.</text>
</comment>
<comment type="catalytic activity">
    <reaction evidence="1">
        <text>alpha-D-glucosamine 1-phosphate + acetyl-CoA = N-acetyl-alpha-D-glucosamine 1-phosphate + CoA + H(+)</text>
        <dbReference type="Rhea" id="RHEA:13725"/>
        <dbReference type="ChEBI" id="CHEBI:15378"/>
        <dbReference type="ChEBI" id="CHEBI:57287"/>
        <dbReference type="ChEBI" id="CHEBI:57288"/>
        <dbReference type="ChEBI" id="CHEBI:57776"/>
        <dbReference type="ChEBI" id="CHEBI:58516"/>
        <dbReference type="EC" id="2.3.1.157"/>
    </reaction>
</comment>
<comment type="catalytic activity">
    <reaction evidence="1">
        <text>N-acetyl-alpha-D-glucosamine 1-phosphate + UTP + H(+) = UDP-N-acetyl-alpha-D-glucosamine + diphosphate</text>
        <dbReference type="Rhea" id="RHEA:13509"/>
        <dbReference type="ChEBI" id="CHEBI:15378"/>
        <dbReference type="ChEBI" id="CHEBI:33019"/>
        <dbReference type="ChEBI" id="CHEBI:46398"/>
        <dbReference type="ChEBI" id="CHEBI:57705"/>
        <dbReference type="ChEBI" id="CHEBI:57776"/>
        <dbReference type="EC" id="2.7.7.23"/>
    </reaction>
</comment>
<comment type="cofactor">
    <cofactor evidence="1">
        <name>Mg(2+)</name>
        <dbReference type="ChEBI" id="CHEBI:18420"/>
    </cofactor>
    <text evidence="1">Binds 1 Mg(2+) ion per subunit.</text>
</comment>
<comment type="pathway">
    <text evidence="1">Nucleotide-sugar biosynthesis; UDP-N-acetyl-alpha-D-glucosamine biosynthesis; N-acetyl-alpha-D-glucosamine 1-phosphate from alpha-D-glucosamine 6-phosphate (route II): step 2/2.</text>
</comment>
<comment type="pathway">
    <text evidence="1">Nucleotide-sugar biosynthesis; UDP-N-acetyl-alpha-D-glucosamine biosynthesis; UDP-N-acetyl-alpha-D-glucosamine from N-acetyl-alpha-D-glucosamine 1-phosphate: step 1/1.</text>
</comment>
<comment type="pathway">
    <text evidence="1">Bacterial outer membrane biogenesis; LPS lipid A biosynthesis.</text>
</comment>
<comment type="subunit">
    <text evidence="1">Homotrimer.</text>
</comment>
<comment type="subcellular location">
    <subcellularLocation>
        <location evidence="1">Cytoplasm</location>
    </subcellularLocation>
</comment>
<comment type="similarity">
    <text evidence="1">In the N-terminal section; belongs to the N-acetylglucosamine-1-phosphate uridyltransferase family.</text>
</comment>
<comment type="similarity">
    <text evidence="1">In the C-terminal section; belongs to the transferase hexapeptide repeat family.</text>
</comment>
<gene>
    <name evidence="1" type="primary">glmU</name>
    <name type="ordered locus">Bcep18194_A6330</name>
</gene>
<name>GLMU_BURL3</name>
<organism>
    <name type="scientific">Burkholderia lata (strain ATCC 17760 / DSM 23089 / LMG 22485 / NCIMB 9086 / R18194 / 383)</name>
    <dbReference type="NCBI Taxonomy" id="482957"/>
    <lineage>
        <taxon>Bacteria</taxon>
        <taxon>Pseudomonadati</taxon>
        <taxon>Pseudomonadota</taxon>
        <taxon>Betaproteobacteria</taxon>
        <taxon>Burkholderiales</taxon>
        <taxon>Burkholderiaceae</taxon>
        <taxon>Burkholderia</taxon>
        <taxon>Burkholderia cepacia complex</taxon>
    </lineage>
</organism>
<accession>Q39C92</accession>
<proteinExistence type="inferred from homology"/>
<feature type="chain" id="PRO_0000233750" description="Bifunctional protein GlmU">
    <location>
        <begin position="1"/>
        <end position="453"/>
    </location>
</feature>
<feature type="region of interest" description="Pyrophosphorylase" evidence="1">
    <location>
        <begin position="1"/>
        <end position="225"/>
    </location>
</feature>
<feature type="region of interest" description="Linker" evidence="1">
    <location>
        <begin position="226"/>
        <end position="246"/>
    </location>
</feature>
<feature type="region of interest" description="N-acetyltransferase" evidence="1">
    <location>
        <begin position="247"/>
        <end position="453"/>
    </location>
</feature>
<feature type="active site" description="Proton acceptor" evidence="1">
    <location>
        <position position="359"/>
    </location>
</feature>
<feature type="binding site" evidence="1">
    <location>
        <begin position="6"/>
        <end position="9"/>
    </location>
    <ligand>
        <name>UDP-N-acetyl-alpha-D-glucosamine</name>
        <dbReference type="ChEBI" id="CHEBI:57705"/>
    </ligand>
</feature>
<feature type="binding site" evidence="1">
    <location>
        <position position="20"/>
    </location>
    <ligand>
        <name>UDP-N-acetyl-alpha-D-glucosamine</name>
        <dbReference type="ChEBI" id="CHEBI:57705"/>
    </ligand>
</feature>
<feature type="binding site" evidence="1">
    <location>
        <position position="71"/>
    </location>
    <ligand>
        <name>UDP-N-acetyl-alpha-D-glucosamine</name>
        <dbReference type="ChEBI" id="CHEBI:57705"/>
    </ligand>
</feature>
<feature type="binding site" evidence="1">
    <location>
        <begin position="76"/>
        <end position="77"/>
    </location>
    <ligand>
        <name>UDP-N-acetyl-alpha-D-glucosamine</name>
        <dbReference type="ChEBI" id="CHEBI:57705"/>
    </ligand>
</feature>
<feature type="binding site" evidence="1">
    <location>
        <begin position="98"/>
        <end position="100"/>
    </location>
    <ligand>
        <name>UDP-N-acetyl-alpha-D-glucosamine</name>
        <dbReference type="ChEBI" id="CHEBI:57705"/>
    </ligand>
</feature>
<feature type="binding site" evidence="1">
    <location>
        <position position="100"/>
    </location>
    <ligand>
        <name>Mg(2+)</name>
        <dbReference type="ChEBI" id="CHEBI:18420"/>
    </ligand>
</feature>
<feature type="binding site" evidence="1">
    <location>
        <position position="135"/>
    </location>
    <ligand>
        <name>UDP-N-acetyl-alpha-D-glucosamine</name>
        <dbReference type="ChEBI" id="CHEBI:57705"/>
    </ligand>
</feature>
<feature type="binding site" evidence="1">
    <location>
        <position position="150"/>
    </location>
    <ligand>
        <name>UDP-N-acetyl-alpha-D-glucosamine</name>
        <dbReference type="ChEBI" id="CHEBI:57705"/>
    </ligand>
</feature>
<feature type="binding site" evidence="1">
    <location>
        <position position="165"/>
    </location>
    <ligand>
        <name>UDP-N-acetyl-alpha-D-glucosamine</name>
        <dbReference type="ChEBI" id="CHEBI:57705"/>
    </ligand>
</feature>
<feature type="binding site" evidence="1">
    <location>
        <position position="223"/>
    </location>
    <ligand>
        <name>Mg(2+)</name>
        <dbReference type="ChEBI" id="CHEBI:18420"/>
    </ligand>
</feature>
<feature type="binding site" evidence="1">
    <location>
        <position position="223"/>
    </location>
    <ligand>
        <name>UDP-N-acetyl-alpha-D-glucosamine</name>
        <dbReference type="ChEBI" id="CHEBI:57705"/>
    </ligand>
</feature>
<feature type="binding site" evidence="1">
    <location>
        <position position="329"/>
    </location>
    <ligand>
        <name>UDP-N-acetyl-alpha-D-glucosamine</name>
        <dbReference type="ChEBI" id="CHEBI:57705"/>
    </ligand>
</feature>
<feature type="binding site" evidence="1">
    <location>
        <position position="347"/>
    </location>
    <ligand>
        <name>UDP-N-acetyl-alpha-D-glucosamine</name>
        <dbReference type="ChEBI" id="CHEBI:57705"/>
    </ligand>
</feature>
<feature type="binding site" evidence="1">
    <location>
        <position position="362"/>
    </location>
    <ligand>
        <name>UDP-N-acetyl-alpha-D-glucosamine</name>
        <dbReference type="ChEBI" id="CHEBI:57705"/>
    </ligand>
</feature>
<feature type="binding site" evidence="1">
    <location>
        <position position="373"/>
    </location>
    <ligand>
        <name>UDP-N-acetyl-alpha-D-glucosamine</name>
        <dbReference type="ChEBI" id="CHEBI:57705"/>
    </ligand>
</feature>
<feature type="binding site" evidence="1">
    <location>
        <position position="376"/>
    </location>
    <ligand>
        <name>acetyl-CoA</name>
        <dbReference type="ChEBI" id="CHEBI:57288"/>
    </ligand>
</feature>
<feature type="binding site" evidence="1">
    <location>
        <begin position="382"/>
        <end position="383"/>
    </location>
    <ligand>
        <name>acetyl-CoA</name>
        <dbReference type="ChEBI" id="CHEBI:57288"/>
    </ligand>
</feature>
<feature type="binding site" evidence="1">
    <location>
        <position position="401"/>
    </location>
    <ligand>
        <name>acetyl-CoA</name>
        <dbReference type="ChEBI" id="CHEBI:57288"/>
    </ligand>
</feature>
<feature type="binding site" evidence="1">
    <location>
        <position position="419"/>
    </location>
    <ligand>
        <name>acetyl-CoA</name>
        <dbReference type="ChEBI" id="CHEBI:57288"/>
    </ligand>
</feature>
<keyword id="KW-0012">Acyltransferase</keyword>
<keyword id="KW-0133">Cell shape</keyword>
<keyword id="KW-0961">Cell wall biogenesis/degradation</keyword>
<keyword id="KW-0963">Cytoplasm</keyword>
<keyword id="KW-0460">Magnesium</keyword>
<keyword id="KW-0479">Metal-binding</keyword>
<keyword id="KW-0511">Multifunctional enzyme</keyword>
<keyword id="KW-0548">Nucleotidyltransferase</keyword>
<keyword id="KW-0573">Peptidoglycan synthesis</keyword>
<keyword id="KW-0677">Repeat</keyword>
<keyword id="KW-0808">Transferase</keyword>
<protein>
    <recommendedName>
        <fullName evidence="1">Bifunctional protein GlmU</fullName>
    </recommendedName>
    <domain>
        <recommendedName>
            <fullName evidence="1">UDP-N-acetylglucosamine pyrophosphorylase</fullName>
            <ecNumber evidence="1">2.7.7.23</ecNumber>
        </recommendedName>
        <alternativeName>
            <fullName evidence="1">N-acetylglucosamine-1-phosphate uridyltransferase</fullName>
        </alternativeName>
    </domain>
    <domain>
        <recommendedName>
            <fullName evidence="1">Glucosamine-1-phosphate N-acetyltransferase</fullName>
            <ecNumber evidence="1">2.3.1.157</ecNumber>
        </recommendedName>
    </domain>
</protein>
<reference key="1">
    <citation type="submission" date="2005-10" db="EMBL/GenBank/DDBJ databases">
        <title>Complete sequence of chromosome 1 of Burkholderia sp. 383.</title>
        <authorList>
            <consortium name="US DOE Joint Genome Institute"/>
            <person name="Copeland A."/>
            <person name="Lucas S."/>
            <person name="Lapidus A."/>
            <person name="Barry K."/>
            <person name="Detter J.C."/>
            <person name="Glavina T."/>
            <person name="Hammon N."/>
            <person name="Israni S."/>
            <person name="Pitluck S."/>
            <person name="Chain P."/>
            <person name="Malfatti S."/>
            <person name="Shin M."/>
            <person name="Vergez L."/>
            <person name="Schmutz J."/>
            <person name="Larimer F."/>
            <person name="Land M."/>
            <person name="Kyrpides N."/>
            <person name="Lykidis A."/>
            <person name="Richardson P."/>
        </authorList>
    </citation>
    <scope>NUCLEOTIDE SEQUENCE [LARGE SCALE GENOMIC DNA]</scope>
    <source>
        <strain>ATCC 17760 / DSM 23089 / LMG 22485 / NCIMB 9086 / R18194 / 383</strain>
    </source>
</reference>
<sequence>MNIVILAAGTGKRMRSALPKVLHPLAGRPLLSHVIDTARTLQPSRLVVVVGHGAEQVQAAVAAPDVQFAVQAEQLGTGHAVRQALPLLDPAQPTLVLYGDVPLTRASTLQRLVDAAREGRYGILTVTLDDPTGYGRIVRDAAGFVTRIVEQKDASPEQLKIAEINTGIIVTPTAQLSMWLGALKNENAQGEYYLTDVVELAIEAGFEVVTAQPDEEWETLGVNSKAQLAELERIHQRNIAEALLVDGVTLADPARLDVRGTLRCGRDVSIDVNCVFEGNVTLADNVTIGANCVIRNASVGAGTRIDAFTHIDGAELGAHTVIGPYARLRPGAQLADEAHVGNFVEVKNAVIGHGSKANHLTYIGDADIGARVNIGAGTITCNYDGANKFRTVIEDDVFVGSDTQLVAPVRVGRGVTIAAGTTIWKDVADGLLALNEKTQTAKSGYVRPVKKKS</sequence>
<evidence type="ECO:0000255" key="1">
    <source>
        <dbReference type="HAMAP-Rule" id="MF_01631"/>
    </source>
</evidence>